<feature type="chain" id="PRO_0000223240" description="Nuclear factor NF-kappa-B p105 subunit">
    <location>
        <begin position="1"/>
        <end position="972"/>
    </location>
</feature>
<feature type="chain" id="PRO_0000223241" description="Nuclear factor NF-kappa-B p50 subunit" evidence="1">
    <location>
        <begin position="1"/>
        <end position="433"/>
    </location>
</feature>
<feature type="domain" description="RHD" evidence="5">
    <location>
        <begin position="39"/>
        <end position="246"/>
    </location>
</feature>
<feature type="repeat" description="ANK 1">
    <location>
        <begin position="539"/>
        <end position="568"/>
    </location>
</feature>
<feature type="repeat" description="ANK 2">
    <location>
        <begin position="578"/>
        <end position="607"/>
    </location>
</feature>
<feature type="repeat" description="ANK 3">
    <location>
        <begin position="611"/>
        <end position="640"/>
    </location>
</feature>
<feature type="repeat" description="ANK 4">
    <location>
        <begin position="647"/>
        <end position="676"/>
    </location>
</feature>
<feature type="repeat" description="ANK 5">
    <location>
        <begin position="681"/>
        <end position="711"/>
    </location>
</feature>
<feature type="repeat" description="ANK 6">
    <location>
        <begin position="715"/>
        <end position="744"/>
    </location>
</feature>
<feature type="repeat" description="ANK 7">
    <location>
        <begin position="768"/>
        <end position="798"/>
    </location>
</feature>
<feature type="domain" description="Death">
    <location>
        <begin position="814"/>
        <end position="889"/>
    </location>
</feature>
<feature type="region of interest" description="GRR" evidence="1">
    <location>
        <begin position="372"/>
        <end position="394"/>
    </location>
</feature>
<feature type="region of interest" description="Disordered" evidence="6">
    <location>
        <begin position="425"/>
        <end position="473"/>
    </location>
</feature>
<feature type="region of interest" description="Interaction with CFLAR" evidence="1">
    <location>
        <begin position="435"/>
        <end position="972"/>
    </location>
</feature>
<feature type="region of interest" description="Essential for interaction with HIF1AN" evidence="1">
    <location>
        <begin position="647"/>
        <end position="681"/>
    </location>
</feature>
<feature type="region of interest" description="Disordered" evidence="6">
    <location>
        <begin position="894"/>
        <end position="926"/>
    </location>
</feature>
<feature type="short sequence motif" description="Nuclear localization signal" evidence="4">
    <location>
        <begin position="360"/>
        <end position="365"/>
    </location>
</feature>
<feature type="compositionally biased region" description="Basic and acidic residues" evidence="6">
    <location>
        <begin position="439"/>
        <end position="454"/>
    </location>
</feature>
<feature type="compositionally biased region" description="Polar residues" evidence="6">
    <location>
        <begin position="905"/>
        <end position="918"/>
    </location>
</feature>
<feature type="site" description="Cleavage (when cotranslationally processed)" evidence="1">
    <location>
        <begin position="433"/>
        <end position="434"/>
    </location>
</feature>
<feature type="modified residue" description="S-nitrosocysteine; alternate" evidence="1">
    <location>
        <position position="61"/>
    </location>
</feature>
<feature type="modified residue" description="Phosphoserine; by PKA" evidence="4">
    <location>
        <position position="337"/>
    </location>
</feature>
<feature type="modified residue" description="N6-acetyllysine; by EP300" evidence="1">
    <location>
        <position position="431"/>
    </location>
</feature>
<feature type="modified residue" description="N6-acetyllysine; by EP300" evidence="1">
    <location>
        <position position="440"/>
    </location>
</feature>
<feature type="modified residue" description="(3S)-3-hydroxyasparagine; by HIF1AN" evidence="1">
    <location>
        <position position="675"/>
    </location>
</feature>
<feature type="modified residue" description="Phosphoserine" evidence="3">
    <location>
        <position position="756"/>
    </location>
</feature>
<feature type="modified residue" description="Phosphoserine; by GSK3-beta; in vitro" evidence="1">
    <location>
        <position position="908"/>
    </location>
</feature>
<feature type="modified residue" description="Phosphoserine; by GSK3-beta; in vitro" evidence="1">
    <location>
        <position position="912"/>
    </location>
</feature>
<feature type="modified residue" description="Phosphoserine" evidence="1">
    <location>
        <position position="927"/>
    </location>
</feature>
<feature type="modified residue" description="Phosphoserine; by IKKB" evidence="1">
    <location>
        <position position="931"/>
    </location>
</feature>
<feature type="modified residue" description="Phosphoserine; by IKKB" evidence="1">
    <location>
        <position position="936"/>
    </location>
</feature>
<feature type="modified residue" description="Phosphoserine" evidence="1">
    <location>
        <position position="941"/>
    </location>
</feature>
<feature type="modified residue" description="Phosphothreonine" evidence="2">
    <location>
        <position position="947"/>
    </location>
</feature>
<feature type="lipid moiety-binding region" description="S-(15-deoxy-Delta12,14-prostaglandin J2-9-yl)cysteine; alternate" evidence="1">
    <location>
        <position position="61"/>
    </location>
</feature>
<feature type="cross-link" description="Glycyl lysine isopeptide (Lys-Gly) (interchain with G-Cter in SUMO2)" evidence="1">
    <location>
        <position position="325"/>
    </location>
</feature>
<feature type="sequence conflict" description="In Ref. 1; BAD27479." evidence="7" ref="1">
    <original>E</original>
    <variation>G</variation>
    <location>
        <position position="289"/>
    </location>
</feature>
<feature type="sequence conflict" description="In Ref. 1; BAD27479." evidence="7" ref="1">
    <original>E</original>
    <variation>G</variation>
    <location>
        <position position="295"/>
    </location>
</feature>
<feature type="sequence conflict" description="In Ref. 1; BAD27479." evidence="7" ref="1">
    <original>A</original>
    <variation>T</variation>
    <location>
        <position position="327"/>
    </location>
</feature>
<feature type="sequence conflict" description="In Ref. 1; BAD27479." evidence="7" ref="1">
    <original>H</original>
    <variation>N</variation>
    <location>
        <position position="432"/>
    </location>
</feature>
<feature type="sequence conflict" description="In Ref. 1; BAD27479." evidence="7" ref="1">
    <original>E</original>
    <variation>G</variation>
    <location>
        <position position="538"/>
    </location>
</feature>
<feature type="sequence conflict" description="In Ref. 1; BAD27479." evidence="7" ref="1">
    <original>I</original>
    <variation>T</variation>
    <location>
        <position position="822"/>
    </location>
</feature>
<feature type="sequence conflict" description="In Ref. 1; BAD27479." evidence="7" ref="1">
    <original>L</original>
    <variation>Q</variation>
    <location>
        <position position="838"/>
    </location>
</feature>
<feature type="sequence conflict" description="In Ref. 1; BAD27479." evidence="7" ref="1">
    <original>K</original>
    <variation>R</variation>
    <location>
        <position position="939"/>
    </location>
</feature>
<keyword id="KW-0007">Acetylation</keyword>
<keyword id="KW-0010">Activator</keyword>
<keyword id="KW-0040">ANK repeat</keyword>
<keyword id="KW-0963">Cytoplasm</keyword>
<keyword id="KW-0238">DNA-binding</keyword>
<keyword id="KW-0379">Hydroxylation</keyword>
<keyword id="KW-1017">Isopeptide bond</keyword>
<keyword id="KW-0449">Lipoprotein</keyword>
<keyword id="KW-0539">Nucleus</keyword>
<keyword id="KW-0597">Phosphoprotein</keyword>
<keyword id="KW-1185">Reference proteome</keyword>
<keyword id="KW-0677">Repeat</keyword>
<keyword id="KW-0702">S-nitrosylation</keyword>
<keyword id="KW-0804">Transcription</keyword>
<keyword id="KW-0805">Transcription regulation</keyword>
<keyword id="KW-0832">Ubl conjugation</keyword>
<sequence>MAEDDTYLGAHEQMFHLDPLTHTIFNPELFQPEMPLPTADGPYLQILEQPKQRGFRFRYVCEGPSHGGLPGASSEKNKKSYPQVKICNYVGPAKVIVQLVTNGKNIHLHAHSLVGKHCEDGICTVTAGPKDMVVGFANLGILHVTKKKVFETLEARMTEACTKGYNPGLLVHPDLAYLQAEGGGDRQLTDREKEIIRQAALQQTKEMDLSVVRLMFTAFLPDSTGSFTRRLEPVVSDAIYDSKAPNASNLKIVRMDRTAGCVTGGEEIYLLCDKVQKDDIQIRFYEEEENGGIWEGFGDFSPTDVHRQFAIVFKTPKYKDVNITKPASVFVQLRRKSDLETSEPKPFLYYPEIKDKEEVQRKRQKLMPNFSDSFGGGSGAGAGGGGMFGSGGGGGGAGSTGPGYGFPHYGFPTYGGITFHPGTTKSNAGMKHGTIDTPSKNDSEGCGKNVDREAVNLSGKVTEPTEQDKESSMGVDEVTLTYTVGIKEENSRFQDNLFLEKAMQLAKRHANALFDYAVTGDVKMLLAVQRHLTAVQDENGDSVLHLAIIHLHAQLVRDLLEVTSGLISDDIINMRNDLYQTPLHLAVITKQEAVVDDLLRAGADLSLLDRLGNSVLHLAAKEGQDKILSILLKHKKAALLMDHPNGEGLNAIHIAVMSNSMPCLLLLVAAGADVNAQERKSGRTALHLAVEHDNISLAGCLLLEGDAHVDSTTYDGTTPLHIAAGRGSTRLAALLKAAGADPLVENFEPLYDLDDSWEKDGEDEGVVPGTTPLDMATNWQVFDILNGKPYEPEFTSDDLLAQGDMKQLTEDAKLQLYKLLEIPDPDKNWATLAQKLGLGILNNAFRLSPAPSKTLMDNYEVSGGTIKELVEALRQMGYTEAIEVIQAAFCAPETAAPSPGKGAPQTLSLPLSSASTRSPVDEVRDDSICDSGVETSFRKLSFTESLTSGSSLLTLNKAPHEYGQEGPIEGKI</sequence>
<gene>
    <name type="primary">NFKB1</name>
</gene>
<protein>
    <recommendedName>
        <fullName>Nuclear factor NF-kappa-B p105 subunit</fullName>
    </recommendedName>
    <alternativeName>
        <fullName>Nuclear factor of kappa light polypeptide gene enhancer in B-cells 1</fullName>
    </alternativeName>
    <component>
        <recommendedName>
            <fullName>Nuclear factor NF-kappa-B p50 subunit</fullName>
        </recommendedName>
    </component>
</protein>
<name>NFKB1_CANLF</name>
<reference key="1">
    <citation type="submission" date="2004-07" db="EMBL/GenBank/DDBJ databases">
        <title>Canis familiaris nuclear factor of kappa light polypeptide gene enhancer in B-cells 1 (p105) (NFKB1), mRNA.</title>
        <authorList>
            <person name="Oguma K."/>
            <person name="Kano R."/>
            <person name="Hasegawa A."/>
        </authorList>
    </citation>
    <scope>NUCLEOTIDE SEQUENCE [MRNA]</scope>
</reference>
<reference key="2">
    <citation type="journal article" date="2005" name="Nature">
        <title>Genome sequence, comparative analysis and haplotype structure of the domestic dog.</title>
        <authorList>
            <person name="Lindblad-Toh K."/>
            <person name="Wade C.M."/>
            <person name="Mikkelsen T.S."/>
            <person name="Karlsson E.K."/>
            <person name="Jaffe D.B."/>
            <person name="Kamal M."/>
            <person name="Clamp M."/>
            <person name="Chang J.L."/>
            <person name="Kulbokas E.J. III"/>
            <person name="Zody M.C."/>
            <person name="Mauceli E."/>
            <person name="Xie X."/>
            <person name="Breen M."/>
            <person name="Wayne R.K."/>
            <person name="Ostrander E.A."/>
            <person name="Ponting C.P."/>
            <person name="Galibert F."/>
            <person name="Smith D.R."/>
            <person name="deJong P.J."/>
            <person name="Kirkness E.F."/>
            <person name="Alvarez P."/>
            <person name="Biagi T."/>
            <person name="Brockman W."/>
            <person name="Butler J."/>
            <person name="Chin C.-W."/>
            <person name="Cook A."/>
            <person name="Cuff J."/>
            <person name="Daly M.J."/>
            <person name="DeCaprio D."/>
            <person name="Gnerre S."/>
            <person name="Grabherr M."/>
            <person name="Kellis M."/>
            <person name="Kleber M."/>
            <person name="Bardeleben C."/>
            <person name="Goodstadt L."/>
            <person name="Heger A."/>
            <person name="Hitte C."/>
            <person name="Kim L."/>
            <person name="Koepfli K.-P."/>
            <person name="Parker H.G."/>
            <person name="Pollinger J.P."/>
            <person name="Searle S.M.J."/>
            <person name="Sutter N.B."/>
            <person name="Thomas R."/>
            <person name="Webber C."/>
            <person name="Baldwin J."/>
            <person name="Abebe A."/>
            <person name="Abouelleil A."/>
            <person name="Aftuck L."/>
            <person name="Ait-Zahra M."/>
            <person name="Aldredge T."/>
            <person name="Allen N."/>
            <person name="An P."/>
            <person name="Anderson S."/>
            <person name="Antoine C."/>
            <person name="Arachchi H."/>
            <person name="Aslam A."/>
            <person name="Ayotte L."/>
            <person name="Bachantsang P."/>
            <person name="Barry A."/>
            <person name="Bayul T."/>
            <person name="Benamara M."/>
            <person name="Berlin A."/>
            <person name="Bessette D."/>
            <person name="Blitshteyn B."/>
            <person name="Bloom T."/>
            <person name="Blye J."/>
            <person name="Boguslavskiy L."/>
            <person name="Bonnet C."/>
            <person name="Boukhgalter B."/>
            <person name="Brown A."/>
            <person name="Cahill P."/>
            <person name="Calixte N."/>
            <person name="Camarata J."/>
            <person name="Cheshatsang Y."/>
            <person name="Chu J."/>
            <person name="Citroen M."/>
            <person name="Collymore A."/>
            <person name="Cooke P."/>
            <person name="Dawoe T."/>
            <person name="Daza R."/>
            <person name="Decktor K."/>
            <person name="DeGray S."/>
            <person name="Dhargay N."/>
            <person name="Dooley K."/>
            <person name="Dooley K."/>
            <person name="Dorje P."/>
            <person name="Dorjee K."/>
            <person name="Dorris L."/>
            <person name="Duffey N."/>
            <person name="Dupes A."/>
            <person name="Egbiremolen O."/>
            <person name="Elong R."/>
            <person name="Falk J."/>
            <person name="Farina A."/>
            <person name="Faro S."/>
            <person name="Ferguson D."/>
            <person name="Ferreira P."/>
            <person name="Fisher S."/>
            <person name="FitzGerald M."/>
            <person name="Foley K."/>
            <person name="Foley C."/>
            <person name="Franke A."/>
            <person name="Friedrich D."/>
            <person name="Gage D."/>
            <person name="Garber M."/>
            <person name="Gearin G."/>
            <person name="Giannoukos G."/>
            <person name="Goode T."/>
            <person name="Goyette A."/>
            <person name="Graham J."/>
            <person name="Grandbois E."/>
            <person name="Gyaltsen K."/>
            <person name="Hafez N."/>
            <person name="Hagopian D."/>
            <person name="Hagos B."/>
            <person name="Hall J."/>
            <person name="Healy C."/>
            <person name="Hegarty R."/>
            <person name="Honan T."/>
            <person name="Horn A."/>
            <person name="Houde N."/>
            <person name="Hughes L."/>
            <person name="Hunnicutt L."/>
            <person name="Husby M."/>
            <person name="Jester B."/>
            <person name="Jones C."/>
            <person name="Kamat A."/>
            <person name="Kanga B."/>
            <person name="Kells C."/>
            <person name="Khazanovich D."/>
            <person name="Kieu A.C."/>
            <person name="Kisner P."/>
            <person name="Kumar M."/>
            <person name="Lance K."/>
            <person name="Landers T."/>
            <person name="Lara M."/>
            <person name="Lee W."/>
            <person name="Leger J.-P."/>
            <person name="Lennon N."/>
            <person name="Leuper L."/>
            <person name="LeVine S."/>
            <person name="Liu J."/>
            <person name="Liu X."/>
            <person name="Lokyitsang Y."/>
            <person name="Lokyitsang T."/>
            <person name="Lui A."/>
            <person name="Macdonald J."/>
            <person name="Major J."/>
            <person name="Marabella R."/>
            <person name="Maru K."/>
            <person name="Matthews C."/>
            <person name="McDonough S."/>
            <person name="Mehta T."/>
            <person name="Meldrim J."/>
            <person name="Melnikov A."/>
            <person name="Meneus L."/>
            <person name="Mihalev A."/>
            <person name="Mihova T."/>
            <person name="Miller K."/>
            <person name="Mittelman R."/>
            <person name="Mlenga V."/>
            <person name="Mulrain L."/>
            <person name="Munson G."/>
            <person name="Navidi A."/>
            <person name="Naylor J."/>
            <person name="Nguyen T."/>
            <person name="Nguyen N."/>
            <person name="Nguyen C."/>
            <person name="Nguyen T."/>
            <person name="Nicol R."/>
            <person name="Norbu N."/>
            <person name="Norbu C."/>
            <person name="Novod N."/>
            <person name="Nyima T."/>
            <person name="Olandt P."/>
            <person name="O'Neill B."/>
            <person name="O'Neill K."/>
            <person name="Osman S."/>
            <person name="Oyono L."/>
            <person name="Patti C."/>
            <person name="Perrin D."/>
            <person name="Phunkhang P."/>
            <person name="Pierre F."/>
            <person name="Priest M."/>
            <person name="Rachupka A."/>
            <person name="Raghuraman S."/>
            <person name="Rameau R."/>
            <person name="Ray V."/>
            <person name="Raymond C."/>
            <person name="Rege F."/>
            <person name="Rise C."/>
            <person name="Rogers J."/>
            <person name="Rogov P."/>
            <person name="Sahalie J."/>
            <person name="Settipalli S."/>
            <person name="Sharpe T."/>
            <person name="Shea T."/>
            <person name="Sheehan M."/>
            <person name="Sherpa N."/>
            <person name="Shi J."/>
            <person name="Shih D."/>
            <person name="Sloan J."/>
            <person name="Smith C."/>
            <person name="Sparrow T."/>
            <person name="Stalker J."/>
            <person name="Stange-Thomann N."/>
            <person name="Stavropoulos S."/>
            <person name="Stone C."/>
            <person name="Stone S."/>
            <person name="Sykes S."/>
            <person name="Tchuinga P."/>
            <person name="Tenzing P."/>
            <person name="Tesfaye S."/>
            <person name="Thoulutsang D."/>
            <person name="Thoulutsang Y."/>
            <person name="Topham K."/>
            <person name="Topping I."/>
            <person name="Tsamla T."/>
            <person name="Vassiliev H."/>
            <person name="Venkataraman V."/>
            <person name="Vo A."/>
            <person name="Wangchuk T."/>
            <person name="Wangdi T."/>
            <person name="Weiand M."/>
            <person name="Wilkinson J."/>
            <person name="Wilson A."/>
            <person name="Yadav S."/>
            <person name="Yang S."/>
            <person name="Yang X."/>
            <person name="Young G."/>
            <person name="Yu Q."/>
            <person name="Zainoun J."/>
            <person name="Zembek L."/>
            <person name="Zimmer A."/>
            <person name="Lander E.S."/>
        </authorList>
    </citation>
    <scope>NUCLEOTIDE SEQUENCE [LARGE SCALE GENOMIC DNA]</scope>
    <source>
        <strain>Boxer</strain>
    </source>
</reference>
<comment type="function">
    <text evidence="1">NF-kappa-B is a pleiotropic transcription factor present in almost all cell types and is the endpoint of a series of signal transduction events that are initiated by a vast array of stimuli related to many biological processes such as inflammation, immunity, differentiation, cell growth, tumorigenesis and apoptosis. NF-kappa-B is a homo- or heterodimeric complex formed by the Rel-like domain-containing proteins RELA/p65, RELB, NFKB1/p105, NFKB1/p50, REL and NFKB2/p52 and the heterodimeric p65-p50 complex appears to be most abundant one. The dimers bind at kappa-B sites in the DNA of their target genes and the individual dimers have distinct preferences for different kappa-B sites that they can bind with distinguishable affinity and specificity. Different dimer combinations act as transcriptional activators or repressors, respectively. NF-kappa-B is controlled by various mechanisms of post-translational modification and subcellular compartmentalization as well as by interactions with other cofactors or corepressors. NF-kappa-B complexes are held in the cytoplasm in an inactive state complexed with members of the NF-kappa-B inhibitor (I-kappa-B) family. In a conventional activation pathway, I-kappa-B is phosphorylated by I-kappa-B kinases (IKKs) in response to different activators, subsequently degraded thus liberating the active NF-kappa-B complex which translocates to the nucleus. NF-kappa-B heterodimeric p65-p50 and RelB-p50 complexes are transcriptional activators. The NF-kappa-B p50-p50 homodimer is a transcriptional repressor, but can act as a transcriptional activator when associated with BCL3. NFKB1 appears to have dual functions such as cytoplasmic retention of attached NF-kappa-B proteins by p105 and generation of p50 by a cotranslational processing. The proteasome-mediated process ensures the production of both p50 and p105 and preserves their independent function, although processing of NFKB1/p105 also appears to occur post-translationally. p50 binds to the kappa-B consensus sequence 5'-GGRNNYYCC-3', located in the enhancer region of genes involved in immune response and acute phase reactions. In a complex with MAP3K8, NFKB1/p105 represses MAP3K8-induced MAPK signaling; active MAP3K8 is released by proteasome-dependent degradation of NFKB1/p105.</text>
</comment>
<comment type="function">
    <molecule>Nuclear factor NF-kappa-B p105 subunit</molecule>
    <text evidence="1">P105 is the precursor of the active p50 subunit (Nuclear factor NF-kappa-B p50 subunit) of the nuclear factor NF-kappa-B. Acts as a cytoplasmic retention of attached NF-kappa-B proteins by p105.</text>
</comment>
<comment type="function">
    <molecule>Nuclear factor NF-kappa-B p50 subunit</molecule>
    <text evidence="1">Constitutes the active form, which associates with RELA/p65 to form the NF-kappa-B p65-p50 complex to form a transcription factor. Together with RELA/p65, binds to the kappa-B consensus sequence 5'-GGRNNYYCC-3', located in the enhancer region of genes involved in immune response and acute phase reactions.</text>
</comment>
<comment type="subunit">
    <text evidence="1 2">Component of the NF-kappa-B p65-p50 complex (By similarity). Homodimer; component of the NF-kappa-B p50-p50 complex (By similarity). Component of the NF-kappa-B p105-p50 complex (By similarity). Component of the NF-kappa-B p50-c-Rel complex (By similarity). Component of a complex consisting of the NF-kappa-B p50-p50 homodimer and BCL3 (By similarity). Also interacts with MAP3K8 (By similarity). NF-kappa-B p50 subunit interacts with NCOA3 coactivator, which may coactivate NF-kappa-B dependent expression via its histone acetyltransferase activity (By similarity). Interacts with TSC22D3; this interaction prevents nuclear translocation and DNA-binding (By similarity). Interacts with SPAG9 and UNC5CL (By similarity). NFKB1/p105 interacts with CFLAR; the interaction inhibits p105 processing into p50 (By similarity). NFKB1/p105 forms a ternary complex with MAP3K8 and TNIP2 (By similarity). Interacts with GSK3B; the interaction prevents processing of p105 to p50 (By similarity). NFKB1/p50 interacts with NFKBIE (By similarity). NFKB1/p50 interacts with NFKBIZ. Nuclear factor NF-kappa-B p50 subunit interacts with NFKBID (By similarity). Directly interacts with MEN1 (By similarity). Interacts with HIF1AN (By similarity). Interacts with FEM1A; interaction is direct (By similarity).</text>
</comment>
<comment type="subcellular location">
    <molecule>Nuclear factor NF-kappa-B p105 subunit</molecule>
    <subcellularLocation>
        <location evidence="1">Cytoplasm</location>
    </subcellularLocation>
</comment>
<comment type="subcellular location">
    <molecule>Nuclear factor NF-kappa-B p50 subunit</molecule>
    <subcellularLocation>
        <location evidence="1">Nucleus</location>
    </subcellularLocation>
    <subcellularLocation>
        <location evidence="1">Cytoplasm</location>
    </subcellularLocation>
    <text evidence="1">Association with NFKBIA inhibitor (I-kappa-B), promotes its retention in the cytoplasm in an inactive form. Translocates into the nucleus following NFKBIA degradation.</text>
</comment>
<comment type="domain">
    <text evidence="1">The C-terminus of p105 might be involved in cytoplasmic retention, inhibition of DNA-binding, and transcription activation.</text>
</comment>
<comment type="domain">
    <text evidence="1">Glycine-rich region (GRR) is a critical element in the generation of p50 (Nuclear factor NF-kappa-B p50 subunit) by acting as a proteasomal 'stop signal', which leads to limited proteasomal degradation of the C-terminus, while generating p50.</text>
</comment>
<comment type="PTM">
    <text evidence="1">Generation of the NF-kappa-B p50 (Nuclear factor NF-kappa-B p50 subunit) transcription factor takes place both cotranslationally and post-translationally via non-mutually exclusive mechanisms. A cotranslational processing allows the production of both p50 and p105 (Nuclear factor NF-kappa-B p105 subunit) from a single NFKB1 mRNA. While translation occurs, the particular unfolded structure after the GRR repeat region acts as a substrate for the proteasome, promoting degradation of the C-terminus. The GRR acts as a proteasomal 'stop signal', protecting the region upstream of the GRR from degradation and promoting generation of p50. It is unclear if limited proteasome degradation during cotranslational processing depends on ubiquitination. NF-kappa-B p50 is also generated post-translationally following ubiquitination by the KPC complex, leading to limited processing by the proteasome downstream of the GRR region, thereby generating p50.</text>
</comment>
<comment type="PTM">
    <molecule>Nuclear factor NF-kappa-B p105 subunit</molecule>
    <text evidence="1">Phosphorylation at the C-terminus by IKBKB/IKKB acts as a signal for ubiquitination and promotes either complete degradation or processing to generate the NF-kappa-B p50 (Nuclear factor NF-kappa-B p50 subunit) (By similarity). Phosphorylation at Ser-908 and Ser-912 primes p105 for proteolytic processing in response to TNF-alpha stimulation (By similarity). Phosphorylation at Ser-927, Ser-931 and Ser-936 are required for BTRC/BTRCP-mediated ubiquitination and proteolysis (By similarity). Phosphorylation at Ser-931 is also required for ubiquitination by the KPC complex and limited processing to generate NF-kappa-B p50 (Nuclear factor NF-kappa-B p50 subunit) (By similarity).</text>
</comment>
<comment type="PTM">
    <molecule>Nuclear factor NF-kappa-B p105 subunit</molecule>
    <text evidence="1">Polyubiquitinated at multiple Lys residues in the C-terminus. Polyubiquitinated by the SCF(FBXW11) and SCF(BTRC) complexes following phosphorylation at Ser-923, Ser-927, Ser-931 and Ser-936, leading to its complete degradation. In contrast, polyubiquitination by the KPC complex following phosphorylation at Ser-931 leads to limited proteosomal processing and generation of the active NF-kappa-B p50 (Nuclear factor NF-kappa-B p50 subunit).</text>
</comment>
<comment type="PTM">
    <text evidence="1">S-nitrosylation of Cys-61 affects DNA binding.</text>
</comment>
<comment type="PTM">
    <text evidence="1">The covalent modification of cysteine by 15-deoxy-Delta12,14-prostaglandin-J2 is autocatalytic and reversible. It may occur as an alternative to other cysteine modifications, such as S-nitrosylation and S-palmitoylation.</text>
</comment>
<evidence type="ECO:0000250" key="1">
    <source>
        <dbReference type="UniProtKB" id="P19838"/>
    </source>
</evidence>
<evidence type="ECO:0000250" key="2">
    <source>
        <dbReference type="UniProtKB" id="P25799"/>
    </source>
</evidence>
<evidence type="ECO:0000250" key="3">
    <source>
        <dbReference type="UniProtKB" id="Q63369"/>
    </source>
</evidence>
<evidence type="ECO:0000255" key="4"/>
<evidence type="ECO:0000255" key="5">
    <source>
        <dbReference type="PROSITE-ProRule" id="PRU00265"/>
    </source>
</evidence>
<evidence type="ECO:0000256" key="6">
    <source>
        <dbReference type="SAM" id="MobiDB-lite"/>
    </source>
</evidence>
<evidence type="ECO:0000305" key="7"/>
<organism>
    <name type="scientific">Canis lupus familiaris</name>
    <name type="common">Dog</name>
    <name type="synonym">Canis familiaris</name>
    <dbReference type="NCBI Taxonomy" id="9615"/>
    <lineage>
        <taxon>Eukaryota</taxon>
        <taxon>Metazoa</taxon>
        <taxon>Chordata</taxon>
        <taxon>Craniata</taxon>
        <taxon>Vertebrata</taxon>
        <taxon>Euteleostomi</taxon>
        <taxon>Mammalia</taxon>
        <taxon>Eutheria</taxon>
        <taxon>Laurasiatheria</taxon>
        <taxon>Carnivora</taxon>
        <taxon>Caniformia</taxon>
        <taxon>Canidae</taxon>
        <taxon>Canis</taxon>
    </lineage>
</organism>
<accession>Q6F3J0</accession>
<accession>F1PM82</accession>
<proteinExistence type="evidence at transcript level"/>
<dbReference type="EMBL" id="AB183419">
    <property type="protein sequence ID" value="BAD27479.1"/>
    <property type="molecule type" value="mRNA"/>
</dbReference>
<dbReference type="RefSeq" id="NP_001003344.1">
    <property type="nucleotide sequence ID" value="NM_001003344.1"/>
</dbReference>
<dbReference type="SMR" id="Q6F3J0"/>
<dbReference type="FunCoup" id="Q6F3J0">
    <property type="interactions" value="814"/>
</dbReference>
<dbReference type="STRING" id="9615.ENSCAFP00000056706"/>
<dbReference type="PaxDb" id="9612-ENSCAFP00000015815"/>
<dbReference type="Ensembl" id="ENSCAFT00000017092.5">
    <property type="protein sequence ID" value="ENSCAFP00000015815.5"/>
    <property type="gene ID" value="ENSCAFG00000010730.5"/>
</dbReference>
<dbReference type="Ensembl" id="ENSCAFT00030037443.1">
    <property type="protein sequence ID" value="ENSCAFP00030032664.1"/>
    <property type="gene ID" value="ENSCAFG00030020386.1"/>
</dbReference>
<dbReference type="Ensembl" id="ENSCAFT00040043145.1">
    <property type="protein sequence ID" value="ENSCAFP00040037640.1"/>
    <property type="gene ID" value="ENSCAFG00040022966.1"/>
</dbReference>
<dbReference type="Ensembl" id="ENSCAFT00845045189.1">
    <property type="protein sequence ID" value="ENSCAFP00845035432.1"/>
    <property type="gene ID" value="ENSCAFG00845025570.1"/>
</dbReference>
<dbReference type="GeneID" id="442859"/>
<dbReference type="KEGG" id="cfa:442859"/>
<dbReference type="CTD" id="4790"/>
<dbReference type="VEuPathDB" id="HostDB:ENSCAFG00845025570"/>
<dbReference type="VGNC" id="VGNC:43780">
    <property type="gene designation" value="NFKB1"/>
</dbReference>
<dbReference type="eggNOG" id="KOG0504">
    <property type="taxonomic scope" value="Eukaryota"/>
</dbReference>
<dbReference type="GeneTree" id="ENSGT00940000158625"/>
<dbReference type="InParanoid" id="Q6F3J0"/>
<dbReference type="OrthoDB" id="10254686at2759"/>
<dbReference type="Reactome" id="R-CFA-1169091">
    <property type="pathway name" value="Activation of NF-kappaB in B cells"/>
</dbReference>
<dbReference type="Reactome" id="R-CFA-1810476">
    <property type="pathway name" value="RIP-mediated NFkB activation via ZBP1"/>
</dbReference>
<dbReference type="Reactome" id="R-CFA-193692">
    <property type="pathway name" value="Regulated proteolysis of p75NTR"/>
</dbReference>
<dbReference type="Reactome" id="R-CFA-202424">
    <property type="pathway name" value="Downstream TCR signaling"/>
</dbReference>
<dbReference type="Reactome" id="R-CFA-209560">
    <property type="pathway name" value="NF-kB is activated and signals survival"/>
</dbReference>
<dbReference type="Reactome" id="R-CFA-2871837">
    <property type="pathway name" value="FCERI mediated NF-kB activation"/>
</dbReference>
<dbReference type="Reactome" id="R-CFA-3134963">
    <property type="pathway name" value="DEx/H-box helicases activate type I IFN and inflammatory cytokines production"/>
</dbReference>
<dbReference type="Reactome" id="R-CFA-3214841">
    <property type="pathway name" value="PKMTs methylate histone lysines"/>
</dbReference>
<dbReference type="Reactome" id="R-CFA-445989">
    <property type="pathway name" value="TAK1-dependent IKK and NF-kappa-B activation"/>
</dbReference>
<dbReference type="Reactome" id="R-CFA-448706">
    <property type="pathway name" value="Interleukin-1 processing"/>
</dbReference>
<dbReference type="Reactome" id="R-CFA-5607764">
    <property type="pathway name" value="CLEC7A (Dectin-1) signaling"/>
</dbReference>
<dbReference type="Reactome" id="R-CFA-5621575">
    <property type="pathway name" value="CD209 (DC-SIGN) signaling"/>
</dbReference>
<dbReference type="Reactome" id="R-CFA-5684264">
    <property type="pathway name" value="MAP3K8 (TPL2)-dependent MAPK1/3 activation"/>
</dbReference>
<dbReference type="Reactome" id="R-CFA-6798695">
    <property type="pathway name" value="Neutrophil degranulation"/>
</dbReference>
<dbReference type="Reactome" id="R-CFA-9020702">
    <property type="pathway name" value="Interleukin-1 signaling"/>
</dbReference>
<dbReference type="Reactome" id="R-CFA-933542">
    <property type="pathway name" value="TRAF6 mediated NF-kB activation"/>
</dbReference>
<dbReference type="Reactome" id="R-CFA-9860927">
    <property type="pathway name" value="Turbulent (oscillatory, disturbed) flow shear stress activates signaling by PIEZO1 and integrins in endothelial cells"/>
</dbReference>
<dbReference type="Proteomes" id="UP000002254">
    <property type="component" value="Chromosome 32"/>
</dbReference>
<dbReference type="Proteomes" id="UP000694429">
    <property type="component" value="Chromosome 32"/>
</dbReference>
<dbReference type="Proteomes" id="UP000694542">
    <property type="component" value="Chromosome 32"/>
</dbReference>
<dbReference type="Proteomes" id="UP000805418">
    <property type="component" value="Chromosome 32"/>
</dbReference>
<dbReference type="GO" id="GO:0005737">
    <property type="term" value="C:cytoplasm"/>
    <property type="evidence" value="ECO:0007669"/>
    <property type="project" value="UniProtKB-SubCell"/>
</dbReference>
<dbReference type="GO" id="GO:0005634">
    <property type="term" value="C:nucleus"/>
    <property type="evidence" value="ECO:0007669"/>
    <property type="project" value="UniProtKB-SubCell"/>
</dbReference>
<dbReference type="GO" id="GO:0003700">
    <property type="term" value="F:DNA-binding transcription factor activity"/>
    <property type="evidence" value="ECO:0000250"/>
    <property type="project" value="UniProtKB"/>
</dbReference>
<dbReference type="GO" id="GO:0000976">
    <property type="term" value="F:transcription cis-regulatory region binding"/>
    <property type="evidence" value="ECO:0000250"/>
    <property type="project" value="UniProtKB"/>
</dbReference>
<dbReference type="GO" id="GO:0000122">
    <property type="term" value="P:negative regulation of transcription by RNA polymerase II"/>
    <property type="evidence" value="ECO:0000250"/>
    <property type="project" value="UniProtKB"/>
</dbReference>
<dbReference type="GO" id="GO:0045893">
    <property type="term" value="P:positive regulation of DNA-templated transcription"/>
    <property type="evidence" value="ECO:0000250"/>
    <property type="project" value="UniProtKB"/>
</dbReference>
<dbReference type="GO" id="GO:0007165">
    <property type="term" value="P:signal transduction"/>
    <property type="evidence" value="ECO:0007669"/>
    <property type="project" value="InterPro"/>
</dbReference>
<dbReference type="CDD" id="cd08797">
    <property type="entry name" value="Death_NFkB1_p105"/>
    <property type="match status" value="1"/>
</dbReference>
<dbReference type="CDD" id="cd01177">
    <property type="entry name" value="IPT_NFkappaB"/>
    <property type="match status" value="1"/>
</dbReference>
<dbReference type="CDD" id="cd07935">
    <property type="entry name" value="RHD-n_NFkB1"/>
    <property type="match status" value="1"/>
</dbReference>
<dbReference type="FunFam" id="2.60.40.10:FF:000046">
    <property type="entry name" value="Nuclear factor NF-kappa-B p105 subunit"/>
    <property type="match status" value="1"/>
</dbReference>
<dbReference type="FunFam" id="1.10.533.10:FF:000018">
    <property type="entry name" value="Nuclear factor NF-kappa-B p105 subunit isoform 1"/>
    <property type="match status" value="1"/>
</dbReference>
<dbReference type="FunFam" id="1.25.40.20:FF:000103">
    <property type="entry name" value="Nuclear factor NF-kappa-B p105 subunit isoform 1"/>
    <property type="match status" value="1"/>
</dbReference>
<dbReference type="FunFam" id="2.60.40.340:FF:000004">
    <property type="entry name" value="Nuclear factor NF-kappa-B p105 subunit isoform 1"/>
    <property type="match status" value="1"/>
</dbReference>
<dbReference type="Gene3D" id="1.25.40.20">
    <property type="entry name" value="Ankyrin repeat-containing domain"/>
    <property type="match status" value="1"/>
</dbReference>
<dbReference type="Gene3D" id="1.10.533.10">
    <property type="entry name" value="Death Domain, Fas"/>
    <property type="match status" value="1"/>
</dbReference>
<dbReference type="Gene3D" id="2.60.40.10">
    <property type="entry name" value="Immunoglobulins"/>
    <property type="match status" value="1"/>
</dbReference>
<dbReference type="Gene3D" id="2.60.40.340">
    <property type="entry name" value="Rel homology domain (RHD), DNA-binding domain"/>
    <property type="match status" value="1"/>
</dbReference>
<dbReference type="InterPro" id="IPR002110">
    <property type="entry name" value="Ankyrin_rpt"/>
</dbReference>
<dbReference type="InterPro" id="IPR036770">
    <property type="entry name" value="Ankyrin_rpt-contain_sf"/>
</dbReference>
<dbReference type="InterPro" id="IPR011029">
    <property type="entry name" value="DEATH-like_dom_sf"/>
</dbReference>
<dbReference type="InterPro" id="IPR000488">
    <property type="entry name" value="Death_dom"/>
</dbReference>
<dbReference type="InterPro" id="IPR013783">
    <property type="entry name" value="Ig-like_fold"/>
</dbReference>
<dbReference type="InterPro" id="IPR014756">
    <property type="entry name" value="Ig_E-set"/>
</dbReference>
<dbReference type="InterPro" id="IPR002909">
    <property type="entry name" value="IPT_dom"/>
</dbReference>
<dbReference type="InterPro" id="IPR033926">
    <property type="entry name" value="IPT_NFkappaB"/>
</dbReference>
<dbReference type="InterPro" id="IPR047096">
    <property type="entry name" value="NF-kB_p105_DD"/>
</dbReference>
<dbReference type="InterPro" id="IPR030503">
    <property type="entry name" value="NF-kB_p105_RHD_N"/>
</dbReference>
<dbReference type="InterPro" id="IPR000451">
    <property type="entry name" value="NFkB/Dor"/>
</dbReference>
<dbReference type="InterPro" id="IPR008967">
    <property type="entry name" value="p53-like_TF_DNA-bd_sf"/>
</dbReference>
<dbReference type="InterPro" id="IPR030492">
    <property type="entry name" value="RHD_CS"/>
</dbReference>
<dbReference type="InterPro" id="IPR032397">
    <property type="entry name" value="RHD_dimer"/>
</dbReference>
<dbReference type="InterPro" id="IPR011539">
    <property type="entry name" value="RHD_DNA_bind_dom"/>
</dbReference>
<dbReference type="InterPro" id="IPR037059">
    <property type="entry name" value="RHD_DNA_bind_dom_sf"/>
</dbReference>
<dbReference type="PANTHER" id="PTHR24169:SF9">
    <property type="entry name" value="NUCLEAR FACTOR NF-KAPPA-B P105 SUBUNIT"/>
    <property type="match status" value="1"/>
</dbReference>
<dbReference type="PANTHER" id="PTHR24169">
    <property type="entry name" value="NUCLEAR FACTOR NF-KAPPA-B PROTEIN"/>
    <property type="match status" value="1"/>
</dbReference>
<dbReference type="Pfam" id="PF00023">
    <property type="entry name" value="Ank"/>
    <property type="match status" value="2"/>
</dbReference>
<dbReference type="Pfam" id="PF12796">
    <property type="entry name" value="Ank_2"/>
    <property type="match status" value="1"/>
</dbReference>
<dbReference type="Pfam" id="PF00531">
    <property type="entry name" value="Death"/>
    <property type="match status" value="1"/>
</dbReference>
<dbReference type="Pfam" id="PF16179">
    <property type="entry name" value="RHD_dimer"/>
    <property type="match status" value="1"/>
</dbReference>
<dbReference type="Pfam" id="PF00554">
    <property type="entry name" value="RHD_DNA_bind"/>
    <property type="match status" value="1"/>
</dbReference>
<dbReference type="PRINTS" id="PR00057">
    <property type="entry name" value="NFKBTNSCPFCT"/>
</dbReference>
<dbReference type="SMART" id="SM00248">
    <property type="entry name" value="ANK"/>
    <property type="match status" value="6"/>
</dbReference>
<dbReference type="SMART" id="SM00005">
    <property type="entry name" value="DEATH"/>
    <property type="match status" value="1"/>
</dbReference>
<dbReference type="SMART" id="SM00429">
    <property type="entry name" value="IPT"/>
    <property type="match status" value="1"/>
</dbReference>
<dbReference type="SUPFAM" id="SSF48403">
    <property type="entry name" value="Ankyrin repeat"/>
    <property type="match status" value="1"/>
</dbReference>
<dbReference type="SUPFAM" id="SSF47986">
    <property type="entry name" value="DEATH domain"/>
    <property type="match status" value="1"/>
</dbReference>
<dbReference type="SUPFAM" id="SSF81296">
    <property type="entry name" value="E set domains"/>
    <property type="match status" value="1"/>
</dbReference>
<dbReference type="SUPFAM" id="SSF49417">
    <property type="entry name" value="p53-like transcription factors"/>
    <property type="match status" value="1"/>
</dbReference>
<dbReference type="PROSITE" id="PS50297">
    <property type="entry name" value="ANK_REP_REGION"/>
    <property type="match status" value="1"/>
</dbReference>
<dbReference type="PROSITE" id="PS50088">
    <property type="entry name" value="ANK_REPEAT"/>
    <property type="match status" value="5"/>
</dbReference>
<dbReference type="PROSITE" id="PS01204">
    <property type="entry name" value="REL_1"/>
    <property type="match status" value="1"/>
</dbReference>
<dbReference type="PROSITE" id="PS50254">
    <property type="entry name" value="REL_2"/>
    <property type="match status" value="1"/>
</dbReference>